<protein>
    <recommendedName>
        <fullName>mRNA export factor</fullName>
    </recommendedName>
    <alternativeName>
        <fullName>Immediate-early protein IE63</fullName>
    </alternativeName>
    <alternativeName>
        <fullName>Infected cell protein 27</fullName>
        <shortName>ICP27</shortName>
    </alternativeName>
    <alternativeName>
        <fullName>VMW63</fullName>
    </alternativeName>
</protein>
<organism>
    <name type="scientific">Human herpesvirus 2 (strain HG52)</name>
    <name type="common">HHV-2</name>
    <name type="synonym">Human herpes simplex virus 2</name>
    <dbReference type="NCBI Taxonomy" id="10315"/>
    <lineage>
        <taxon>Viruses</taxon>
        <taxon>Duplodnaviria</taxon>
        <taxon>Heunggongvirae</taxon>
        <taxon>Peploviricota</taxon>
        <taxon>Herviviricetes</taxon>
        <taxon>Herpesvirales</taxon>
        <taxon>Orthoherpesviridae</taxon>
        <taxon>Alphaherpesvirinae</taxon>
        <taxon>Simplexvirus</taxon>
        <taxon>Simplexvirus humanalpha2</taxon>
        <taxon>Human herpesvirus 2</taxon>
    </lineage>
</organism>
<reference key="1">
    <citation type="journal article" date="1991" name="J. Gen. Virol.">
        <title>Comparative sequence analysis of the long repeat regions and adjoining parts of the long unique regions in the genomes of herpes simplex viruses types 1 and 2.</title>
        <authorList>
            <person name="McGeoch D.J."/>
            <person name="Cunningham C."/>
            <person name="McIntyre G."/>
            <person name="Dolan A."/>
        </authorList>
    </citation>
    <scope>NUCLEOTIDE SEQUENCE [GENOMIC DNA]</scope>
</reference>
<reference key="2">
    <citation type="journal article" date="1998" name="J. Virol.">
        <title>The genome sequence of herpes simplex virus type 2.</title>
        <authorList>
            <person name="Dolan A."/>
            <person name="Jamieson F.E."/>
            <person name="Cunningham C."/>
            <person name="Barnett B.C."/>
            <person name="McGeoch D.J."/>
        </authorList>
    </citation>
    <scope>NUCLEOTIDE SEQUENCE [LARGE SCALE GENOMIC DNA]</scope>
</reference>
<reference key="3">
    <citation type="journal article" date="2009" name="Nucleic Acids Res.">
        <title>Herpesvirus protein ICP27 switches PML isoform by altering mRNA splicing.</title>
        <authorList>
            <person name="Nojima T."/>
            <person name="Oshiro-Ideue T."/>
            <person name="Nakanoya H."/>
            <person name="Kawamura H."/>
            <person name="Morimoto T."/>
            <person name="Kawaguchi Y."/>
            <person name="Kataoka N."/>
            <person name="Hagiwara M."/>
        </authorList>
    </citation>
    <scope>FUNCTION</scope>
</reference>
<reference key="4">
    <citation type="journal article" date="2013" name="J. Virol.">
        <title>Herpes simplex virus 2 expresses a novel form of ICP34.5, a major viral neurovirulence factor, through regulated alternative splicing.</title>
        <authorList>
            <person name="Tang S."/>
            <person name="Guo N."/>
            <person name="Patel A."/>
            <person name="Krause P.R."/>
        </authorList>
    </citation>
    <scope>FUNCTION</scope>
</reference>
<reference key="5">
    <citation type="journal article" date="2015" name="J. Virol.">
        <title>Functional comparison of herpes simplex virus 1 (HSV-1) and HSV-2 ICP27 homologs reveals a role for ICP27 in virion release.</title>
        <authorList>
            <person name="Park D."/>
            <person name="Lalli J."/>
            <person name="Sedlackova-Slavikova L."/>
            <person name="Rice S.A."/>
        </authorList>
    </citation>
    <scope>FUNCTION</scope>
    <scope>SUBCELLULAR LOCATION</scope>
    <source>
        <strain>HG52</strain>
    </source>
</reference>
<reference key="6">
    <citation type="journal article" date="2019" name="Front. Immunol.">
        <title>Herpes Simplex Virus Type 2 Immediate Early Protein ICP27 Inhibits IFN-beta Production in Mucosal Epithelial Cells by Antagonizing IRF3 Activation.</title>
        <authorList>
            <person name="Guan X."/>
            <person name="Zhang M."/>
            <person name="Fu M."/>
            <person name="Luo S."/>
            <person name="Hu Q."/>
        </authorList>
    </citation>
    <scope>FUNCTION</scope>
    <scope>INTERACTION WITH HOST IRF3</scope>
    <scope>DOMAIN</scope>
</reference>
<organismHost>
    <name type="scientific">Homo sapiens</name>
    <name type="common">Human</name>
    <dbReference type="NCBI Taxonomy" id="9606"/>
</organismHost>
<proteinExistence type="evidence at protein level"/>
<name>ICP27_HHV2H</name>
<sequence>MATDIDMLIDLGLDLSDSELEEDALERDEEGRRDDPESDSSGECSSSDEDMEDPCGDGGAEAIDAAIPKGPPARPEDAGTPEASTPRPAARRGADDPPPATTGVWSRLGTRRSASPREPHGGKVARIQPPSTKAPHPRGGRRGRRRGRGRYGPGGADSTPKPRRRVSRNAHNQGGRHPASARTDGPGATHGEARRGGEQLDVSGGPRPRGTRQAPPPLMALSLTPPHADGRAPVPERKAPSADTIDPAVRAVLRSISERAAVERISESFGRSALVMQDPFGGMPFPAANSPWAPVLATQAGGFDAETRRVSWETLVAHGPSLYRTFAANPRAASTAKAMRDCVLRQENLIEALASADETLAWCKMCIHHNLPLRPQDPIIGTAAAVLENLATRLRPFLQCYLKARGLCGLDDLCSRRRLSDIKDIASFVLVILARLANRVERGVSEIDYTTVGVGAGETMHFYIPGACMAGLIEILDTHRQECSSRVCELTASHTIAPLYVHGKYFYCNSLF</sequence>
<dbReference type="EMBL" id="D10471">
    <property type="protein sequence ID" value="BAA01269.1"/>
    <property type="molecule type" value="Genomic_DNA"/>
</dbReference>
<dbReference type="EMBL" id="Z86099">
    <property type="protein sequence ID" value="CAB06702.1"/>
    <property type="molecule type" value="Genomic_DNA"/>
</dbReference>
<dbReference type="PIR" id="JQ1498">
    <property type="entry name" value="WMBEXA"/>
</dbReference>
<dbReference type="SMR" id="P28276"/>
<dbReference type="Proteomes" id="UP000001874">
    <property type="component" value="Segment"/>
</dbReference>
<dbReference type="GO" id="GO:0030430">
    <property type="term" value="C:host cell cytoplasm"/>
    <property type="evidence" value="ECO:0000314"/>
    <property type="project" value="UniProtKB"/>
</dbReference>
<dbReference type="GO" id="GO:0042025">
    <property type="term" value="C:host cell nucleus"/>
    <property type="evidence" value="ECO:0000314"/>
    <property type="project" value="UniProtKB"/>
</dbReference>
<dbReference type="GO" id="GO:0003723">
    <property type="term" value="F:RNA binding"/>
    <property type="evidence" value="ECO:0007669"/>
    <property type="project" value="UniProtKB-KW"/>
</dbReference>
<dbReference type="GO" id="GO:0008270">
    <property type="term" value="F:zinc ion binding"/>
    <property type="evidence" value="ECO:0007669"/>
    <property type="project" value="UniProtKB-KW"/>
</dbReference>
<dbReference type="GO" id="GO:0035891">
    <property type="term" value="P:exit from host cell"/>
    <property type="evidence" value="ECO:0000314"/>
    <property type="project" value="UniProtKB"/>
</dbReference>
<dbReference type="GO" id="GO:0006355">
    <property type="term" value="P:regulation of DNA-templated transcription"/>
    <property type="evidence" value="ECO:0007669"/>
    <property type="project" value="InterPro"/>
</dbReference>
<dbReference type="GO" id="GO:0085033">
    <property type="term" value="P:symbiont-mediated activation of host NF-kappaB cascade"/>
    <property type="evidence" value="ECO:0007669"/>
    <property type="project" value="UniProtKB-KW"/>
</dbReference>
<dbReference type="GO" id="GO:0039645">
    <property type="term" value="P:symbiont-mediated perturbation of host cell cycle G1/S transition checkpoint"/>
    <property type="evidence" value="ECO:0007669"/>
    <property type="project" value="UniProtKB-KW"/>
</dbReference>
<dbReference type="GO" id="GO:0039548">
    <property type="term" value="P:symbiont-mediated suppression of host cytoplasmic pattern recognition receptor signaling pathway via inhibition of IRF3 activity"/>
    <property type="evidence" value="ECO:0000314"/>
    <property type="project" value="UniProtKB"/>
</dbReference>
<dbReference type="GO" id="GO:0039657">
    <property type="term" value="P:symbiont-mediated suppression of host gene expression"/>
    <property type="evidence" value="ECO:0007669"/>
    <property type="project" value="UniProtKB-KW"/>
</dbReference>
<dbReference type="GO" id="GO:0039524">
    <property type="term" value="P:symbiont-mediated suppression of host mRNA processing"/>
    <property type="evidence" value="ECO:0007669"/>
    <property type="project" value="UniProtKB-KW"/>
</dbReference>
<dbReference type="InterPro" id="IPR031752">
    <property type="entry name" value="HHV-1_REF-bd"/>
</dbReference>
<dbReference type="InterPro" id="IPR008648">
    <property type="entry name" value="ICP27-like"/>
</dbReference>
<dbReference type="Pfam" id="PF05459">
    <property type="entry name" value="Herpes_UL69"/>
    <property type="match status" value="1"/>
</dbReference>
<dbReference type="Pfam" id="PF16852">
    <property type="entry name" value="HHV-1_VABD"/>
    <property type="match status" value="1"/>
</dbReference>
<comment type="function">
    <text evidence="4 5 6 7">Multifunctional regulator of the expression of viral genes that contributes to the shutoff of host protein synthesis and mediates nuclear export of viral intronless mRNAs. Also stimulates translation of viral transcripts (PubMed:25540385). Independently, plays a role in the regulation of virion release (PubMed:25540385). Also plays a role in the inhibition of host innate immune response by targeting host IRF3 and thereby preventing production of beta-interferon (PubMed:30863402). Silences the 3' splice site of the host promyelocytic leukemia (PML) intron 7a, thereby switching PML isoforms from PML-II to PML-V. This could be linked to the accelerated mRNA export induced by ICP27 which might not provide sufficient time for PML pre-mRNA to be spliced in the nucleus (PubMed:19729513). Also suppresses splicing of the viral ICP34.5 mRNA, allowing the virus to express a variant form of ICP34.5 (PubMed:23487469).</text>
</comment>
<comment type="subunit">
    <text evidence="1 7">Interacts with host RBP1; this interaction facilitates the RNA polymerase recruitment to viral transcription sites. Interacts (via the RGG box) with host ALYREF/THOC4; this interaction recruits ALYREF to viral replication compartments and probably directs viral mRNA to the TAP/NFX1 pathway. Interacts (via the RGG box) with host SRPK1; this interaction relocalizes SRPK1 to the nucleus and seems to alter its activity. Interacts with ICP4; this interaction modulates ICP4 DNA-binding activity. Interacts with host NXF1; this interaction allows efficient export of HSV-1 early and late transcripts (By similarity). Interacts with host IRF3; this interaction inhibits IRF3 phosphorylation and nuclear translocation.</text>
</comment>
<comment type="subcellular location">
    <subcellularLocation>
        <location evidence="6">Host cytoplasm</location>
    </subcellularLocation>
    <subcellularLocation>
        <location evidence="6">Host nucleus</location>
    </subcellularLocation>
    <text evidence="6">Shuttles between the nucleus and the cytoplasm.</text>
</comment>
<comment type="domain">
    <text evidence="1">Binds viral intronless RNAs through the RGG region.</text>
</comment>
<comment type="domain">
    <text evidence="7">The N-terminal domain is mainly responsible for the inhibition of IFN-beta induction.</text>
</comment>
<comment type="PTM">
    <text evidence="1">Methylated within the RGG box possibly by host PRMT1. When hypomethylated, ICP27 is exported to the cytoplasm earlier and more rapidly (By similarity).</text>
</comment>
<comment type="PTM">
    <text evidence="1">Phosphorylated.</text>
</comment>
<comment type="similarity">
    <text evidence="8">Belongs to the HHV-1 ICP27 protein family.</text>
</comment>
<evidence type="ECO:0000250" key="1"/>
<evidence type="ECO:0000250" key="2">
    <source>
        <dbReference type="UniProtKB" id="P10238"/>
    </source>
</evidence>
<evidence type="ECO:0000256" key="3">
    <source>
        <dbReference type="SAM" id="MobiDB-lite"/>
    </source>
</evidence>
<evidence type="ECO:0000269" key="4">
    <source>
    </source>
</evidence>
<evidence type="ECO:0000269" key="5">
    <source>
    </source>
</evidence>
<evidence type="ECO:0000269" key="6">
    <source>
    </source>
</evidence>
<evidence type="ECO:0000269" key="7">
    <source>
    </source>
</evidence>
<evidence type="ECO:0000305" key="8"/>
<feature type="chain" id="PRO_0000115825" description="mRNA export factor">
    <location>
        <begin position="1"/>
        <end position="512"/>
    </location>
</feature>
<feature type="zinc finger region" description="CHC2-type" evidence="2">
    <location>
        <begin position="400"/>
        <end position="488"/>
    </location>
</feature>
<feature type="region of interest" description="Disordered" evidence="3">
    <location>
        <begin position="1"/>
        <end position="242"/>
    </location>
</feature>
<feature type="region of interest" description="Interaction with host ALYREF" evidence="1">
    <location>
        <begin position="104"/>
        <end position="112"/>
    </location>
</feature>
<feature type="region of interest" description="RGG-box">
    <location>
        <begin position="138"/>
        <end position="152"/>
    </location>
</feature>
<feature type="short sequence motif" description="Nuclear export signal" evidence="1">
    <location>
        <begin position="5"/>
        <end position="17"/>
    </location>
</feature>
<feature type="short sequence motif" description="Nuclear localization signal" evidence="1">
    <location>
        <begin position="110"/>
        <end position="138"/>
    </location>
</feature>
<feature type="compositionally biased region" description="Acidic residues" evidence="3">
    <location>
        <begin position="16"/>
        <end position="28"/>
    </location>
</feature>
<feature type="compositionally biased region" description="Acidic residues" evidence="3">
    <location>
        <begin position="36"/>
        <end position="55"/>
    </location>
</feature>
<feature type="compositionally biased region" description="Basic residues" evidence="3">
    <location>
        <begin position="135"/>
        <end position="149"/>
    </location>
</feature>
<feature type="compositionally biased region" description="Basic and acidic residues" evidence="3">
    <location>
        <begin position="228"/>
        <end position="240"/>
    </location>
</feature>
<feature type="binding site" evidence="2">
    <location>
        <position position="400"/>
    </location>
    <ligand>
        <name>Zn(2+)</name>
        <dbReference type="ChEBI" id="CHEBI:29105"/>
    </ligand>
</feature>
<feature type="binding site" evidence="2">
    <location>
        <position position="479"/>
    </location>
    <ligand>
        <name>Zn(2+)</name>
        <dbReference type="ChEBI" id="CHEBI:29105"/>
    </ligand>
</feature>
<feature type="binding site" evidence="2">
    <location>
        <position position="483"/>
    </location>
    <ligand>
        <name>Zn(2+)</name>
        <dbReference type="ChEBI" id="CHEBI:29105"/>
    </ligand>
</feature>
<feature type="binding site" evidence="2">
    <location>
        <position position="488"/>
    </location>
    <ligand>
        <name>Zn(2+)</name>
        <dbReference type="ChEBI" id="CHEBI:29105"/>
    </ligand>
</feature>
<feature type="modified residue" description="Phosphoserine; by host" evidence="1">
    <location>
        <position position="16"/>
    </location>
</feature>
<feature type="modified residue" description="Phosphoserine; by host" evidence="1">
    <location>
        <position position="18"/>
    </location>
</feature>
<feature type="modified residue" description="Phosphoserine; by host" evidence="1">
    <location>
        <position position="113"/>
    </location>
</feature>
<feature type="modified residue" description="Dimethylated arginine; by host" evidence="2">
    <location>
        <position position="138"/>
    </location>
</feature>
<feature type="modified residue" description="Omega-N-methylarginine; by host" evidence="2">
    <location>
        <position position="148"/>
    </location>
</feature>
<feature type="modified residue" description="Dimethylated arginine; by host" evidence="2">
    <location>
        <position position="150"/>
    </location>
</feature>
<keyword id="KW-1074">Activation of host NF-kappa-B by virus</keyword>
<keyword id="KW-0010">Activator</keyword>
<keyword id="KW-0244">Early protein</keyword>
<keyword id="KW-1262">Eukaryotic host gene expression shutoff by virus</keyword>
<keyword id="KW-1078">G1/S host cell cycle checkpoint dysregulation by virus</keyword>
<keyword id="KW-1035">Host cytoplasm</keyword>
<keyword id="KW-1190">Host gene expression shutoff by virus</keyword>
<keyword id="KW-1192">Host mRNA suppression by virus</keyword>
<keyword id="KW-1048">Host nucleus</keyword>
<keyword id="KW-0945">Host-virus interaction</keyword>
<keyword id="KW-1090">Inhibition of host innate immune response by virus</keyword>
<keyword id="KW-1092">Inhibition of host IRF3 by virus</keyword>
<keyword id="KW-1103">Inhibition of host pre-mRNA processing by virus</keyword>
<keyword id="KW-1113">Inhibition of host RLR pathway by virus</keyword>
<keyword id="KW-0479">Metal-binding</keyword>
<keyword id="KW-0488">Methylation</keyword>
<keyword id="KW-1121">Modulation of host cell cycle by virus</keyword>
<keyword id="KW-0597">Phosphoprotein</keyword>
<keyword id="KW-1185">Reference proteome</keyword>
<keyword id="KW-0694">RNA-binding</keyword>
<keyword id="KW-0804">Transcription</keyword>
<keyword id="KW-0805">Transcription regulation</keyword>
<keyword id="KW-0899">Viral immunoevasion</keyword>
<keyword id="KW-0862">Zinc</keyword>
<keyword id="KW-0863">Zinc-finger</keyword>
<gene>
    <name type="ORF">UL54</name>
</gene>
<accession>P28276</accession>